<accession>B2RXZ1</accession>
<evidence type="ECO:0000250" key="1">
    <source>
        <dbReference type="UniProtKB" id="O95453"/>
    </source>
</evidence>
<evidence type="ECO:0000250" key="2">
    <source>
        <dbReference type="UniProtKB" id="Q8NA58"/>
    </source>
</evidence>
<evidence type="ECO:0000255" key="3"/>
<evidence type="ECO:0000269" key="4">
    <source>
    </source>
</evidence>
<evidence type="ECO:0000269" key="5">
    <source>
    </source>
</evidence>
<evidence type="ECO:0000305" key="6"/>
<evidence type="ECO:0000312" key="7">
    <source>
        <dbReference type="MGI" id="MGI:2685159"/>
    </source>
</evidence>
<keyword id="KW-0256">Endoplasmic reticulum</keyword>
<keyword id="KW-0269">Exonuclease</keyword>
<keyword id="KW-0378">Hydrolase</keyword>
<keyword id="KW-0460">Magnesium</keyword>
<keyword id="KW-0472">Membrane</keyword>
<keyword id="KW-0479">Metal-binding</keyword>
<keyword id="KW-0866">Nonsense-mediated mRNA decay</keyword>
<keyword id="KW-0540">Nuclease</keyword>
<keyword id="KW-1185">Reference proteome</keyword>
<keyword id="KW-0694">RNA-binding</keyword>
<keyword id="KW-0812">Transmembrane</keyword>
<keyword id="KW-1133">Transmembrane helix</keyword>
<gene>
    <name evidence="7" type="primary">Pnldc1</name>
</gene>
<comment type="function">
    <text evidence="2 5">3'-exoribonuclease that has a preference for poly(A) tails of mRNAs, thereby efficiently degrading poly(A) tails (PubMed:27515512). Exonucleolytic degradation of the poly(A) tail is often the first step in the decay of eukaryotic mRNAs and is also used to silence certain maternal mRNAs translationally during oocyte maturation and early embryonic development (PubMed:27515512). May act as a regulator of multipotency in embryonic stem cells (PubMed:27515512). Is a critical factor for proper spermatogenesis, involved in pre-piRNAs processing to generate mature piRNAs (By similarity).</text>
</comment>
<comment type="catalytic activity">
    <reaction evidence="5">
        <text>Exonucleolytic cleavage of poly(A) to 5'-AMP.</text>
        <dbReference type="EC" id="3.1.13.4"/>
    </reaction>
</comment>
<comment type="cofactor">
    <cofactor evidence="2">
        <name>Mg(2+)</name>
        <dbReference type="ChEBI" id="CHEBI:18420"/>
    </cofactor>
</comment>
<comment type="subcellular location">
    <subcellularLocation>
        <location evidence="5">Endoplasmic reticulum membrane</location>
        <topology evidence="2">Single-pass membrane protein</topology>
    </subcellularLocation>
    <text evidence="5">Localizes mainly in the endoplasmic reticulum.</text>
</comment>
<comment type="tissue specificity">
    <text evidence="4 5">Specifically expressed in embryonic stem cells (PubMed:27515512). Highly expressed in testis (PubMed:26919431, PubMed:27515512).</text>
</comment>
<comment type="developmental stage">
    <text evidence="5">Expressed during early embryo development and fades during differentiation.</text>
</comment>
<comment type="induction">
    <text evidence="5">Down-regulated in differentiated cells, due to methylation of its promoter by the methyltransferase DNMT3B.</text>
</comment>
<comment type="similarity">
    <text evidence="6">Belongs to the CAF1 family.</text>
</comment>
<comment type="caution">
    <text evidence="4 5">Preliminary results in vitro suggested that Pnldc1 might act as an exonuclease that specifically cleaves precursor piRNAs (pre-piRNAs) at their 3' ends (PubMed:26919431). These results however require additional experimental evidences: another report showed that the protein mainly localizes to the endoplasmic reticulum and preferentially acts on poly(A) tails (PubMed:27515512).</text>
</comment>
<name>PNDC1_MOUSE</name>
<organism>
    <name type="scientific">Mus musculus</name>
    <name type="common">Mouse</name>
    <dbReference type="NCBI Taxonomy" id="10090"/>
    <lineage>
        <taxon>Eukaryota</taxon>
        <taxon>Metazoa</taxon>
        <taxon>Chordata</taxon>
        <taxon>Craniata</taxon>
        <taxon>Vertebrata</taxon>
        <taxon>Euteleostomi</taxon>
        <taxon>Mammalia</taxon>
        <taxon>Eutheria</taxon>
        <taxon>Euarchontoglires</taxon>
        <taxon>Glires</taxon>
        <taxon>Rodentia</taxon>
        <taxon>Myomorpha</taxon>
        <taxon>Muroidea</taxon>
        <taxon>Muridae</taxon>
        <taxon>Murinae</taxon>
        <taxon>Mus</taxon>
        <taxon>Mus</taxon>
    </lineage>
</organism>
<feature type="chain" id="PRO_0000439351" description="Poly(A)-specific ribonuclease PNLDC1">
    <location>
        <begin position="1"/>
        <end position="531"/>
    </location>
</feature>
<feature type="transmembrane region" description="Helical" evidence="3">
    <location>
        <begin position="506"/>
        <end position="526"/>
    </location>
</feature>
<feature type="binding site" evidence="1">
    <location>
        <position position="28"/>
    </location>
    <ligand>
        <name>Mg(2+)</name>
        <dbReference type="ChEBI" id="CHEBI:18420"/>
        <note>catalytic</note>
    </ligand>
</feature>
<feature type="binding site" evidence="1">
    <location>
        <position position="30"/>
    </location>
    <ligand>
        <name>Mg(2+)</name>
        <dbReference type="ChEBI" id="CHEBI:18420"/>
        <note>catalytic</note>
    </ligand>
</feature>
<feature type="binding site" evidence="1">
    <location>
        <position position="271"/>
    </location>
    <ligand>
        <name>Mg(2+)</name>
        <dbReference type="ChEBI" id="CHEBI:18420"/>
        <note>catalytic</note>
    </ligand>
</feature>
<feature type="binding site" evidence="1">
    <location>
        <position position="365"/>
    </location>
    <ligand>
        <name>Mg(2+)</name>
        <dbReference type="ChEBI" id="CHEBI:18420"/>
        <note>catalytic</note>
    </ligand>
</feature>
<sequence>MDVGADEFEQSLPLLQELVAGADFVGLDIEFTGLRSNLSRPQQISLFDLPSEWYLKTRQSVQQFTICQIGLSMFSSIEGESNKYVAHSCNFFLFPTTFGILDSEFSFQASSVQFLNQYGFDYNKFLKNGIPYMNEEQEKKIKHSILRGNWRVRSSLDKDQIKVVIDKVTQWLDLAEEGDQMTLPGIAGFQAFEVQLVLRQALPNIWTVLKEEWVIVKKVSQPQRWYLEHASCDQVSCWKEQILLSARGFSVFFQMLVKAQKPLVGHNMMMDLLHLHEKFFRPLPESYDQFKQNIHSLFPVLIDTKNVTKDIWKELRFPRVSNLLEVYEVLSSNLNPTKDSGPVIIHARQCKKYAETKCPHEAAYDAFLCGSVLLKVAHLLLQRVHGNGAVHEPAFPQYLDVLAPYVNQVNLIRAGVPKINFSGPDYPSIRPPVLILTVKRWPGVSEQQVYREFQNLCKFDVRRFTRSQFLLLTNKFKDARSVLKEYRNHPTLQVSLYRSWRHSPNITCLLQVCSIVTTWAMIAFLLGRPMP</sequence>
<protein>
    <recommendedName>
        <fullName evidence="6">Poly(A)-specific ribonuclease PNLDC1</fullName>
        <ecNumber evidence="5">3.1.13.4</ecNumber>
    </recommendedName>
    <alternativeName>
        <fullName evidence="7">PARN-like domain-containing protein 1</fullName>
    </alternativeName>
    <alternativeName>
        <fullName evidence="7">Poly(A)-specific ribonuclease domain-containing protein 1</fullName>
    </alternativeName>
</protein>
<dbReference type="EC" id="3.1.13.4" evidence="5"/>
<dbReference type="EMBL" id="AL589878">
    <property type="status" value="NOT_ANNOTATED_CDS"/>
    <property type="molecule type" value="Genomic_DNA"/>
</dbReference>
<dbReference type="EMBL" id="BC158033">
    <property type="protein sequence ID" value="AAI58034.1"/>
    <property type="molecule type" value="mRNA"/>
</dbReference>
<dbReference type="CCDS" id="CCDS49948.1"/>
<dbReference type="RefSeq" id="NP_001030038.1">
    <property type="nucleotide sequence ID" value="NM_001034866.1"/>
</dbReference>
<dbReference type="SMR" id="B2RXZ1"/>
<dbReference type="FunCoup" id="B2RXZ1">
    <property type="interactions" value="231"/>
</dbReference>
<dbReference type="STRING" id="10090.ENSMUSP00000129377"/>
<dbReference type="PhosphoSitePlus" id="B2RXZ1"/>
<dbReference type="PaxDb" id="10090-ENSMUSP00000129377"/>
<dbReference type="ProteomicsDB" id="289464"/>
<dbReference type="Antibodypedia" id="64136">
    <property type="antibodies" value="69 antibodies from 19 providers"/>
</dbReference>
<dbReference type="Ensembl" id="ENSMUST00000163394.3">
    <property type="protein sequence ID" value="ENSMUSP00000129377.2"/>
    <property type="gene ID" value="ENSMUSG00000073460.6"/>
</dbReference>
<dbReference type="GeneID" id="240023"/>
<dbReference type="KEGG" id="mmu:240023"/>
<dbReference type="UCSC" id="uc012akg.1">
    <property type="organism name" value="mouse"/>
</dbReference>
<dbReference type="AGR" id="MGI:2685159"/>
<dbReference type="CTD" id="154197"/>
<dbReference type="MGI" id="MGI:2685159">
    <property type="gene designation" value="Pnldc1"/>
</dbReference>
<dbReference type="VEuPathDB" id="HostDB:ENSMUSG00000073460"/>
<dbReference type="eggNOG" id="KOG1990">
    <property type="taxonomic scope" value="Eukaryota"/>
</dbReference>
<dbReference type="GeneTree" id="ENSGT00940000153167"/>
<dbReference type="HOGENOM" id="CLU_018030_3_0_1"/>
<dbReference type="InParanoid" id="B2RXZ1"/>
<dbReference type="OMA" id="SCDRASC"/>
<dbReference type="OrthoDB" id="414075at2759"/>
<dbReference type="PhylomeDB" id="B2RXZ1"/>
<dbReference type="TreeFam" id="TF314502"/>
<dbReference type="BRENDA" id="3.1.13.4">
    <property type="organism ID" value="3474"/>
</dbReference>
<dbReference type="BioGRID-ORCS" id="240023">
    <property type="hits" value="1 hit in 77 CRISPR screens"/>
</dbReference>
<dbReference type="PRO" id="PR:B2RXZ1"/>
<dbReference type="Proteomes" id="UP000000589">
    <property type="component" value="Chromosome 17"/>
</dbReference>
<dbReference type="RNAct" id="B2RXZ1">
    <property type="molecule type" value="protein"/>
</dbReference>
<dbReference type="Bgee" id="ENSMUSG00000073460">
    <property type="expression patterns" value="Expressed in cleaving embryo and 90 other cell types or tissues"/>
</dbReference>
<dbReference type="ExpressionAtlas" id="B2RXZ1">
    <property type="expression patterns" value="baseline and differential"/>
</dbReference>
<dbReference type="GO" id="GO:0005783">
    <property type="term" value="C:endoplasmic reticulum"/>
    <property type="evidence" value="ECO:0000314"/>
    <property type="project" value="UniProtKB"/>
</dbReference>
<dbReference type="GO" id="GO:0005789">
    <property type="term" value="C:endoplasmic reticulum membrane"/>
    <property type="evidence" value="ECO:0007669"/>
    <property type="project" value="UniProtKB-SubCell"/>
</dbReference>
<dbReference type="GO" id="GO:0046872">
    <property type="term" value="F:metal ion binding"/>
    <property type="evidence" value="ECO:0007669"/>
    <property type="project" value="UniProtKB-KW"/>
</dbReference>
<dbReference type="GO" id="GO:0004535">
    <property type="term" value="F:poly(A)-specific ribonuclease activity"/>
    <property type="evidence" value="ECO:0000314"/>
    <property type="project" value="UniProtKB"/>
</dbReference>
<dbReference type="GO" id="GO:0003723">
    <property type="term" value="F:RNA binding"/>
    <property type="evidence" value="ECO:0007669"/>
    <property type="project" value="UniProtKB-KW"/>
</dbReference>
<dbReference type="GO" id="GO:0001825">
    <property type="term" value="P:blastocyst formation"/>
    <property type="evidence" value="ECO:0000315"/>
    <property type="project" value="MGI"/>
</dbReference>
<dbReference type="GO" id="GO:0000184">
    <property type="term" value="P:nuclear-transcribed mRNA catabolic process, nonsense-mediated decay"/>
    <property type="evidence" value="ECO:0007669"/>
    <property type="project" value="UniProtKB-KW"/>
</dbReference>
<dbReference type="GO" id="GO:0000289">
    <property type="term" value="P:nuclear-transcribed mRNA poly(A) tail shortening"/>
    <property type="evidence" value="ECO:0000314"/>
    <property type="project" value="UniProtKB"/>
</dbReference>
<dbReference type="GO" id="GO:0034587">
    <property type="term" value="P:piRNA processing"/>
    <property type="evidence" value="ECO:0007669"/>
    <property type="project" value="Ensembl"/>
</dbReference>
<dbReference type="GO" id="GO:0007283">
    <property type="term" value="P:spermatogenesis"/>
    <property type="evidence" value="ECO:0007669"/>
    <property type="project" value="Ensembl"/>
</dbReference>
<dbReference type="FunFam" id="3.30.420.10:FF:000058">
    <property type="entry name" value="PARN like, ribonuclease domain containing 1"/>
    <property type="match status" value="1"/>
</dbReference>
<dbReference type="FunFam" id="3.30.420.10:FF:000061">
    <property type="entry name" value="PARN like, ribonuclease domain containing 1"/>
    <property type="match status" value="1"/>
</dbReference>
<dbReference type="Gene3D" id="3.30.420.10">
    <property type="entry name" value="Ribonuclease H-like superfamily/Ribonuclease H"/>
    <property type="match status" value="2"/>
</dbReference>
<dbReference type="InterPro" id="IPR051181">
    <property type="entry name" value="CAF1_poly(A)_ribonucleases"/>
</dbReference>
<dbReference type="InterPro" id="IPR006941">
    <property type="entry name" value="RNase_CAF1"/>
</dbReference>
<dbReference type="InterPro" id="IPR012337">
    <property type="entry name" value="RNaseH-like_sf"/>
</dbReference>
<dbReference type="InterPro" id="IPR036397">
    <property type="entry name" value="RNaseH_sf"/>
</dbReference>
<dbReference type="PANTHER" id="PTHR15092">
    <property type="entry name" value="POLY A -SPECIFIC RIBONUCLEASE/TARGET OF EGR1, MEMBER 1"/>
    <property type="match status" value="1"/>
</dbReference>
<dbReference type="PANTHER" id="PTHR15092:SF22">
    <property type="entry name" value="POLY(A)-SPECIFIC RIBONUCLEASE PNLDC1"/>
    <property type="match status" value="1"/>
</dbReference>
<dbReference type="Pfam" id="PF04857">
    <property type="entry name" value="CAF1"/>
    <property type="match status" value="1"/>
</dbReference>
<dbReference type="SUPFAM" id="SSF53098">
    <property type="entry name" value="Ribonuclease H-like"/>
    <property type="match status" value="1"/>
</dbReference>
<proteinExistence type="evidence at protein level"/>
<reference key="1">
    <citation type="journal article" date="2009" name="PLoS Biol.">
        <title>Lineage-specific biology revealed by a finished genome assembly of the mouse.</title>
        <authorList>
            <person name="Church D.M."/>
            <person name="Goodstadt L."/>
            <person name="Hillier L.W."/>
            <person name="Zody M.C."/>
            <person name="Goldstein S."/>
            <person name="She X."/>
            <person name="Bult C.J."/>
            <person name="Agarwala R."/>
            <person name="Cherry J.L."/>
            <person name="DiCuccio M."/>
            <person name="Hlavina W."/>
            <person name="Kapustin Y."/>
            <person name="Meric P."/>
            <person name="Maglott D."/>
            <person name="Birtle Z."/>
            <person name="Marques A.C."/>
            <person name="Graves T."/>
            <person name="Zhou S."/>
            <person name="Teague B."/>
            <person name="Potamousis K."/>
            <person name="Churas C."/>
            <person name="Place M."/>
            <person name="Herschleb J."/>
            <person name="Runnheim R."/>
            <person name="Forrest D."/>
            <person name="Amos-Landgraf J."/>
            <person name="Schwartz D.C."/>
            <person name="Cheng Z."/>
            <person name="Lindblad-Toh K."/>
            <person name="Eichler E.E."/>
            <person name="Ponting C.P."/>
        </authorList>
    </citation>
    <scope>NUCLEOTIDE SEQUENCE [LARGE SCALE GENOMIC DNA]</scope>
    <source>
        <strain>C57BL/6J</strain>
    </source>
</reference>
<reference key="2">
    <citation type="journal article" date="2004" name="Genome Res.">
        <title>The status, quality, and expansion of the NIH full-length cDNA project: the Mammalian Gene Collection (MGC).</title>
        <authorList>
            <consortium name="The MGC Project Team"/>
        </authorList>
    </citation>
    <scope>NUCLEOTIDE SEQUENCE [LARGE SCALE MRNA]</scope>
    <source>
        <tissue>Brain</tissue>
    </source>
</reference>
<reference key="3">
    <citation type="journal article" date="2016" name="Cell">
        <title>Identification and functional analysis of the pre-piRNA 3' trimmer in silkworms.</title>
        <authorList>
            <person name="Izumi N."/>
            <person name="Shoji K."/>
            <person name="Sakaguchi Y."/>
            <person name="Honda S."/>
            <person name="Kirino Y."/>
            <person name="Suzuki T."/>
            <person name="Katsuma S."/>
            <person name="Tomari Y."/>
        </authorList>
    </citation>
    <scope>TISSUE SPECIFICITY</scope>
</reference>
<reference key="4">
    <citation type="journal article" date="2016" name="Nucleic Acids Res.">
        <title>Mammalian PNLDC1 is a novel poly(A) specific exonuclease with discrete expression during early development.</title>
        <authorList>
            <person name="Anastasakis D."/>
            <person name="Skeparnias I."/>
            <person name="Shaukat A.N."/>
            <person name="Grafanaki K."/>
            <person name="Kanellou A."/>
            <person name="Taraviras S."/>
            <person name="Papachristou D.J."/>
            <person name="Papakyriakou A."/>
            <person name="Stathopoulos C."/>
        </authorList>
    </citation>
    <scope>FUNCTION</scope>
    <scope>CATALYTIC ACTIVITY</scope>
    <scope>SUBCELLULAR LOCATION</scope>
    <scope>TISSUE SPECIFICITY</scope>
    <scope>DEVELOPMENTAL STAGE</scope>
    <scope>INDUCTION</scope>
</reference>